<evidence type="ECO:0000256" key="1">
    <source>
        <dbReference type="SAM" id="MobiDB-lite"/>
    </source>
</evidence>
<organism>
    <name type="scientific">Oncorhynchus mykiss</name>
    <name type="common">Rainbow trout</name>
    <name type="synonym">Salmo gairdneri</name>
    <dbReference type="NCBI Taxonomy" id="8022"/>
    <lineage>
        <taxon>Eukaryota</taxon>
        <taxon>Metazoa</taxon>
        <taxon>Chordata</taxon>
        <taxon>Craniata</taxon>
        <taxon>Vertebrata</taxon>
        <taxon>Euteleostomi</taxon>
        <taxon>Actinopterygii</taxon>
        <taxon>Neopterygii</taxon>
        <taxon>Teleostei</taxon>
        <taxon>Protacanthopterygii</taxon>
        <taxon>Salmoniformes</taxon>
        <taxon>Salmonidae</taxon>
        <taxon>Salmoninae</taxon>
        <taxon>Oncorhynchus</taxon>
    </lineage>
</organism>
<comment type="function">
    <text>Protamines substitute for histones in the chromatin of sperm during the haploid phase of spermatogenesis. They compact sperm DNA into a highly condensed, stable and inactive complex.</text>
</comment>
<comment type="subcellular location">
    <subcellularLocation>
        <location>Nucleus</location>
    </subcellularLocation>
    <subcellularLocation>
        <location>Chromosome</location>
    </subcellularLocation>
</comment>
<comment type="tissue specificity">
    <text>Testis.</text>
</comment>
<dbReference type="PIR" id="F24970">
    <property type="entry name" value="F24970"/>
</dbReference>
<dbReference type="Proteomes" id="UP000694395">
    <property type="component" value="Unplaced"/>
</dbReference>
<dbReference type="GO" id="GO:0000786">
    <property type="term" value="C:nucleosome"/>
    <property type="evidence" value="ECO:0007669"/>
    <property type="project" value="UniProtKB-KW"/>
</dbReference>
<dbReference type="GO" id="GO:0005634">
    <property type="term" value="C:nucleus"/>
    <property type="evidence" value="ECO:0007669"/>
    <property type="project" value="UniProtKB-SubCell"/>
</dbReference>
<dbReference type="GO" id="GO:0003677">
    <property type="term" value="F:DNA binding"/>
    <property type="evidence" value="ECO:0007669"/>
    <property type="project" value="UniProtKB-KW"/>
</dbReference>
<dbReference type="GO" id="GO:0030154">
    <property type="term" value="P:cell differentiation"/>
    <property type="evidence" value="ECO:0007669"/>
    <property type="project" value="UniProtKB-KW"/>
</dbReference>
<dbReference type="GO" id="GO:0030261">
    <property type="term" value="P:chromosome condensation"/>
    <property type="evidence" value="ECO:0007669"/>
    <property type="project" value="UniProtKB-KW"/>
</dbReference>
<dbReference type="GO" id="GO:0007283">
    <property type="term" value="P:spermatogenesis"/>
    <property type="evidence" value="ECO:0007669"/>
    <property type="project" value="UniProtKB-KW"/>
</dbReference>
<keyword id="KW-0158">Chromosome</keyword>
<keyword id="KW-0217">Developmental protein</keyword>
<keyword id="KW-0221">Differentiation</keyword>
<keyword id="KW-0903">Direct protein sequencing</keyword>
<keyword id="KW-0226">DNA condensation</keyword>
<keyword id="KW-0238">DNA-binding</keyword>
<keyword id="KW-0544">Nucleosome core</keyword>
<keyword id="KW-0539">Nucleus</keyword>
<keyword id="KW-0744">Spermatogenesis</keyword>
<protein>
    <recommendedName>
        <fullName>Protamine-3A</fullName>
    </recommendedName>
</protein>
<accession>P12818</accession>
<proteinExistence type="evidence at protein level"/>
<sequence length="32" mass="4264">PRRRRRSSSRPIRRRRRPRVSRRRRRGGRRRR</sequence>
<name>PRT3A_ONCMY</name>
<reference key="1">
    <citation type="journal article" date="1986" name="Eur. J. Biochem.">
        <title>Rainbow trout protamines. Amino acid sequences of six distinct proteins from a single testis.</title>
        <authorList>
            <person name="McKay D.J."/>
            <person name="Renaux B.S."/>
            <person name="Dixon G.H."/>
        </authorList>
    </citation>
    <scope>PROTEIN SEQUENCE</scope>
</reference>
<feature type="peptide" id="PRO_0000044843" description="Protamine-3A">
    <location>
        <begin position="1"/>
        <end position="32"/>
    </location>
</feature>
<feature type="region of interest" description="Disordered" evidence="1">
    <location>
        <begin position="1"/>
        <end position="32"/>
    </location>
</feature>